<comment type="function">
    <text evidence="1">Activates KDO (a required 8-carbon sugar) for incorporation into bacterial lipopolysaccharide in Gram-negative bacteria.</text>
</comment>
<comment type="catalytic activity">
    <reaction evidence="1">
        <text>3-deoxy-alpha-D-manno-oct-2-ulosonate + CTP = CMP-3-deoxy-beta-D-manno-octulosonate + diphosphate</text>
        <dbReference type="Rhea" id="RHEA:23448"/>
        <dbReference type="ChEBI" id="CHEBI:33019"/>
        <dbReference type="ChEBI" id="CHEBI:37563"/>
        <dbReference type="ChEBI" id="CHEBI:85986"/>
        <dbReference type="ChEBI" id="CHEBI:85987"/>
        <dbReference type="EC" id="2.7.7.38"/>
    </reaction>
</comment>
<comment type="pathway">
    <text evidence="1">Nucleotide-sugar biosynthesis; CMP-3-deoxy-D-manno-octulosonate biosynthesis; CMP-3-deoxy-D-manno-octulosonate from 3-deoxy-D-manno-octulosonate and CTP: step 1/1.</text>
</comment>
<comment type="pathway">
    <text evidence="1">Bacterial outer membrane biogenesis; lipopolysaccharide biosynthesis.</text>
</comment>
<comment type="subcellular location">
    <subcellularLocation>
        <location evidence="1">Cytoplasm</location>
    </subcellularLocation>
</comment>
<comment type="similarity">
    <text evidence="1">Belongs to the KdsB family.</text>
</comment>
<feature type="chain" id="PRO_1000091859" description="3-deoxy-manno-octulosonate cytidylyltransferase">
    <location>
        <begin position="1"/>
        <end position="258"/>
    </location>
</feature>
<dbReference type="EC" id="2.7.7.38" evidence="1"/>
<dbReference type="EMBL" id="BX248583">
    <property type="protein sequence ID" value="CAD83442.1"/>
    <property type="molecule type" value="Genomic_DNA"/>
</dbReference>
<dbReference type="SMR" id="Q7VR47"/>
<dbReference type="STRING" id="203907.Bfl376"/>
<dbReference type="KEGG" id="bfl:Bfl376"/>
<dbReference type="eggNOG" id="COG1212">
    <property type="taxonomic scope" value="Bacteria"/>
</dbReference>
<dbReference type="HOGENOM" id="CLU_065038_1_0_6"/>
<dbReference type="OrthoDB" id="9815559at2"/>
<dbReference type="UniPathway" id="UPA00030"/>
<dbReference type="UniPathway" id="UPA00358">
    <property type="reaction ID" value="UER00476"/>
</dbReference>
<dbReference type="Proteomes" id="UP000002192">
    <property type="component" value="Chromosome"/>
</dbReference>
<dbReference type="GO" id="GO:0005829">
    <property type="term" value="C:cytosol"/>
    <property type="evidence" value="ECO:0007669"/>
    <property type="project" value="TreeGrafter"/>
</dbReference>
<dbReference type="GO" id="GO:0008690">
    <property type="term" value="F:3-deoxy-manno-octulosonate cytidylyltransferase activity"/>
    <property type="evidence" value="ECO:0007669"/>
    <property type="project" value="UniProtKB-UniRule"/>
</dbReference>
<dbReference type="GO" id="GO:0033468">
    <property type="term" value="P:CMP-keto-3-deoxy-D-manno-octulosonic acid biosynthetic process"/>
    <property type="evidence" value="ECO:0007669"/>
    <property type="project" value="UniProtKB-UniRule"/>
</dbReference>
<dbReference type="GO" id="GO:0009103">
    <property type="term" value="P:lipopolysaccharide biosynthetic process"/>
    <property type="evidence" value="ECO:0007669"/>
    <property type="project" value="UniProtKB-UniRule"/>
</dbReference>
<dbReference type="CDD" id="cd02517">
    <property type="entry name" value="CMP-KDO-Synthetase"/>
    <property type="match status" value="1"/>
</dbReference>
<dbReference type="FunFam" id="3.90.550.10:FF:000011">
    <property type="entry name" value="3-deoxy-manno-octulosonate cytidylyltransferase"/>
    <property type="match status" value="1"/>
</dbReference>
<dbReference type="Gene3D" id="3.90.550.10">
    <property type="entry name" value="Spore Coat Polysaccharide Biosynthesis Protein SpsA, Chain A"/>
    <property type="match status" value="1"/>
</dbReference>
<dbReference type="HAMAP" id="MF_00057">
    <property type="entry name" value="KdsB"/>
    <property type="match status" value="1"/>
</dbReference>
<dbReference type="InterPro" id="IPR003329">
    <property type="entry name" value="Cytidylyl_trans"/>
</dbReference>
<dbReference type="InterPro" id="IPR004528">
    <property type="entry name" value="KdsB"/>
</dbReference>
<dbReference type="InterPro" id="IPR029044">
    <property type="entry name" value="Nucleotide-diphossugar_trans"/>
</dbReference>
<dbReference type="NCBIfam" id="TIGR00466">
    <property type="entry name" value="kdsB"/>
    <property type="match status" value="1"/>
</dbReference>
<dbReference type="NCBIfam" id="NF003952">
    <property type="entry name" value="PRK05450.1-5"/>
    <property type="match status" value="1"/>
</dbReference>
<dbReference type="PANTHER" id="PTHR42866">
    <property type="entry name" value="3-DEOXY-MANNO-OCTULOSONATE CYTIDYLYLTRANSFERASE"/>
    <property type="match status" value="1"/>
</dbReference>
<dbReference type="PANTHER" id="PTHR42866:SF2">
    <property type="entry name" value="3-DEOXY-MANNO-OCTULOSONATE CYTIDYLYLTRANSFERASE, MITOCHONDRIAL"/>
    <property type="match status" value="1"/>
</dbReference>
<dbReference type="Pfam" id="PF02348">
    <property type="entry name" value="CTP_transf_3"/>
    <property type="match status" value="1"/>
</dbReference>
<dbReference type="SUPFAM" id="SSF53448">
    <property type="entry name" value="Nucleotide-diphospho-sugar transferases"/>
    <property type="match status" value="1"/>
</dbReference>
<proteinExistence type="inferred from homology"/>
<name>KDSB_BLOFL</name>
<gene>
    <name evidence="1" type="primary">kdsB</name>
    <name type="ordered locus">Bfl376</name>
</gene>
<evidence type="ECO:0000255" key="1">
    <source>
        <dbReference type="HAMAP-Rule" id="MF_00057"/>
    </source>
</evidence>
<accession>Q7VR47</accession>
<sequence length="258" mass="30003">MNFIIIIPARFFSSRFPGKLLADIQGKPMIIRVIEKALTTKTTKIIVATDSVSIKQIVEYEYYSFGDKVEVCLTYSDHQSGTERISEIVKRYRFADDQIIVQLQGDEPLISSYMIHQIVDVFNMTTSNNISVSTLATPIFFYNEVIDSNIVKVVVNIYGVALYFSRSMIPWMSINHDFNQELGIWLRHIGIYAYRVNFLSRYMNWIKSSLEKYEMLEQLRILWNGETIYVSVMDNIRNISVDTPESLRKVNELFLISN</sequence>
<keyword id="KW-0963">Cytoplasm</keyword>
<keyword id="KW-0448">Lipopolysaccharide biosynthesis</keyword>
<keyword id="KW-0548">Nucleotidyltransferase</keyword>
<keyword id="KW-1185">Reference proteome</keyword>
<keyword id="KW-0808">Transferase</keyword>
<protein>
    <recommendedName>
        <fullName evidence="1">3-deoxy-manno-octulosonate cytidylyltransferase</fullName>
        <ecNumber evidence="1">2.7.7.38</ecNumber>
    </recommendedName>
    <alternativeName>
        <fullName evidence="1">CMP-2-keto-3-deoxyoctulosonic acid synthase</fullName>
        <shortName evidence="1">CKS</shortName>
        <shortName evidence="1">CMP-KDO synthase</shortName>
    </alternativeName>
</protein>
<organism>
    <name type="scientific">Blochmanniella floridana</name>
    <dbReference type="NCBI Taxonomy" id="203907"/>
    <lineage>
        <taxon>Bacteria</taxon>
        <taxon>Pseudomonadati</taxon>
        <taxon>Pseudomonadota</taxon>
        <taxon>Gammaproteobacteria</taxon>
        <taxon>Enterobacterales</taxon>
        <taxon>Enterobacteriaceae</taxon>
        <taxon>ant endosymbionts</taxon>
        <taxon>Candidatus Blochmanniella</taxon>
    </lineage>
</organism>
<reference key="1">
    <citation type="journal article" date="2003" name="Proc. Natl. Acad. Sci. U.S.A.">
        <title>The genome sequence of Blochmannia floridanus: comparative analysis of reduced genomes.</title>
        <authorList>
            <person name="Gil R."/>
            <person name="Silva F.J."/>
            <person name="Zientz E."/>
            <person name="Delmotte F."/>
            <person name="Gonzalez-Candelas F."/>
            <person name="Latorre A."/>
            <person name="Rausell C."/>
            <person name="Kamerbeek J."/>
            <person name="Gadau J."/>
            <person name="Hoelldobler B."/>
            <person name="van Ham R.C.H.J."/>
            <person name="Gross R."/>
            <person name="Moya A."/>
        </authorList>
    </citation>
    <scope>NUCLEOTIDE SEQUENCE [LARGE SCALE GENOMIC DNA]</scope>
</reference>